<organism>
    <name type="scientific">Synechococcus sp. (strain JA-2-3B'a(2-13))</name>
    <name type="common">Cyanobacteria bacterium Yellowstone B-Prime</name>
    <dbReference type="NCBI Taxonomy" id="321332"/>
    <lineage>
        <taxon>Bacteria</taxon>
        <taxon>Bacillati</taxon>
        <taxon>Cyanobacteriota</taxon>
        <taxon>Cyanophyceae</taxon>
        <taxon>Synechococcales</taxon>
        <taxon>Synechococcaceae</taxon>
        <taxon>Synechococcus</taxon>
    </lineage>
</organism>
<keyword id="KW-1185">Reference proteome</keyword>
<keyword id="KW-0687">Ribonucleoprotein</keyword>
<keyword id="KW-0689">Ribosomal protein</keyword>
<dbReference type="EMBL" id="CP000240">
    <property type="protein sequence ID" value="ABD02670.1"/>
    <property type="molecule type" value="Genomic_DNA"/>
</dbReference>
<dbReference type="SMR" id="Q2JKV8"/>
<dbReference type="STRING" id="321332.CYB_1711"/>
<dbReference type="KEGG" id="cyb:CYB_1711"/>
<dbReference type="eggNOG" id="ENOG503137T">
    <property type="taxonomic scope" value="Bacteria"/>
</dbReference>
<dbReference type="HOGENOM" id="CLU_132693_1_0_3"/>
<dbReference type="OrthoDB" id="486850at2"/>
<dbReference type="Proteomes" id="UP000001938">
    <property type="component" value="Chromosome"/>
</dbReference>
<dbReference type="GO" id="GO:1990904">
    <property type="term" value="C:ribonucleoprotein complex"/>
    <property type="evidence" value="ECO:0007669"/>
    <property type="project" value="UniProtKB-KW"/>
</dbReference>
<dbReference type="GO" id="GO:0005840">
    <property type="term" value="C:ribosome"/>
    <property type="evidence" value="ECO:0007669"/>
    <property type="project" value="UniProtKB-KW"/>
</dbReference>
<dbReference type="GO" id="GO:0003735">
    <property type="term" value="F:structural constituent of ribosome"/>
    <property type="evidence" value="ECO:0007669"/>
    <property type="project" value="InterPro"/>
</dbReference>
<dbReference type="GO" id="GO:0006412">
    <property type="term" value="P:translation"/>
    <property type="evidence" value="ECO:0007669"/>
    <property type="project" value="UniProtKB-UniRule"/>
</dbReference>
<dbReference type="Gene3D" id="3.30.390.140">
    <property type="match status" value="1"/>
</dbReference>
<dbReference type="HAMAP" id="MF_00619">
    <property type="entry name" value="Ribosomal_plastid_cS23"/>
    <property type="match status" value="1"/>
</dbReference>
<dbReference type="InterPro" id="IPR038447">
    <property type="entry name" value="PSRP-3/Ycf65_sf"/>
</dbReference>
<dbReference type="InterPro" id="IPR006924">
    <property type="entry name" value="Ribosomal_PSRP3/Ycf65"/>
</dbReference>
<dbReference type="NCBIfam" id="NF002740">
    <property type="entry name" value="PRK02724.1"/>
    <property type="match status" value="1"/>
</dbReference>
<dbReference type="PANTHER" id="PTHR35108">
    <property type="entry name" value="30S RIBOSOMAL PROTEIN 3, CHLOROPLASTIC"/>
    <property type="match status" value="1"/>
</dbReference>
<dbReference type="PANTHER" id="PTHR35108:SF1">
    <property type="entry name" value="OS04G0461100 PROTEIN"/>
    <property type="match status" value="1"/>
</dbReference>
<dbReference type="Pfam" id="PF04839">
    <property type="entry name" value="PSRP-3_Ycf65"/>
    <property type="match status" value="1"/>
</dbReference>
<feature type="chain" id="PRO_1000130443" description="Probable small ribosomal subunit protein cS23">
    <location>
        <begin position="1"/>
        <end position="99"/>
    </location>
</feature>
<name>RRP3_SYNJB</name>
<comment type="function">
    <text evidence="1">Probably a ribosomal protein or a ribosome-associated protein.</text>
</comment>
<comment type="subunit">
    <text evidence="1">Part of the 30S ribosomal subunit.</text>
</comment>
<comment type="similarity">
    <text evidence="1">Belongs to the chloroplast-specific ribosomal protein cS23 family.</text>
</comment>
<reference key="1">
    <citation type="journal article" date="2007" name="ISME J.">
        <title>Population level functional diversity in a microbial community revealed by comparative genomic and metagenomic analyses.</title>
        <authorList>
            <person name="Bhaya D."/>
            <person name="Grossman A.R."/>
            <person name="Steunou A.-S."/>
            <person name="Khuri N."/>
            <person name="Cohan F.M."/>
            <person name="Hamamura N."/>
            <person name="Melendrez M.C."/>
            <person name="Bateson M.M."/>
            <person name="Ward D.M."/>
            <person name="Heidelberg J.F."/>
        </authorList>
    </citation>
    <scope>NUCLEOTIDE SEQUENCE [LARGE SCALE GENOMIC DNA]</scope>
    <source>
        <strain>JA-2-3B'a(2-13)</strain>
    </source>
</reference>
<gene>
    <name type="ordered locus">CYB_1711</name>
</gene>
<accession>Q2JKV8</accession>
<sequence>MPKFALKALWLENDLAIAVDQVVAKNRSPLTHYFFWPRDDAWEQLKAELESKTWISEVDRIELLNRATELINYWQNGGRNRPISEAQAQFPDILIGGNS</sequence>
<evidence type="ECO:0000255" key="1">
    <source>
        <dbReference type="HAMAP-Rule" id="MF_00619"/>
    </source>
</evidence>
<protein>
    <recommendedName>
        <fullName evidence="1">Probable small ribosomal subunit protein cS23</fullName>
    </recommendedName>
    <alternativeName>
        <fullName>Probable 30S ribosomal protein PSRP-3</fullName>
    </alternativeName>
    <alternativeName>
        <fullName>Ycf65-like protein</fullName>
    </alternativeName>
</protein>
<proteinExistence type="inferred from homology"/>